<evidence type="ECO:0000255" key="1">
    <source>
        <dbReference type="HAMAP-Rule" id="MF_01197"/>
    </source>
</evidence>
<evidence type="ECO:0000256" key="2">
    <source>
        <dbReference type="SAM" id="MobiDB-lite"/>
    </source>
</evidence>
<protein>
    <recommendedName>
        <fullName evidence="1">Cell division protein SepF</fullName>
    </recommendedName>
</protein>
<accession>C1CFN5</accession>
<dbReference type="EMBL" id="CP000919">
    <property type="protein sequence ID" value="ACO18684.1"/>
    <property type="molecule type" value="Genomic_DNA"/>
</dbReference>
<dbReference type="RefSeq" id="WP_000053387.1">
    <property type="nucleotide sequence ID" value="NC_012466.1"/>
</dbReference>
<dbReference type="SMR" id="C1CFN5"/>
<dbReference type="KEGG" id="sjj:SPJ_1559"/>
<dbReference type="HOGENOM" id="CLU_078499_2_0_9"/>
<dbReference type="Proteomes" id="UP000002206">
    <property type="component" value="Chromosome"/>
</dbReference>
<dbReference type="GO" id="GO:0005737">
    <property type="term" value="C:cytoplasm"/>
    <property type="evidence" value="ECO:0007669"/>
    <property type="project" value="UniProtKB-SubCell"/>
</dbReference>
<dbReference type="GO" id="GO:0000917">
    <property type="term" value="P:division septum assembly"/>
    <property type="evidence" value="ECO:0007669"/>
    <property type="project" value="UniProtKB-KW"/>
</dbReference>
<dbReference type="GO" id="GO:0043093">
    <property type="term" value="P:FtsZ-dependent cytokinesis"/>
    <property type="evidence" value="ECO:0007669"/>
    <property type="project" value="UniProtKB-UniRule"/>
</dbReference>
<dbReference type="Gene3D" id="3.30.110.150">
    <property type="entry name" value="SepF-like protein"/>
    <property type="match status" value="1"/>
</dbReference>
<dbReference type="HAMAP" id="MF_01197">
    <property type="entry name" value="SepF"/>
    <property type="match status" value="1"/>
</dbReference>
<dbReference type="InterPro" id="IPR023052">
    <property type="entry name" value="Cell_div_SepF"/>
</dbReference>
<dbReference type="InterPro" id="IPR007561">
    <property type="entry name" value="Cell_div_SepF/SepF-rel"/>
</dbReference>
<dbReference type="InterPro" id="IPR038594">
    <property type="entry name" value="SepF-like_sf"/>
</dbReference>
<dbReference type="PANTHER" id="PTHR35798">
    <property type="entry name" value="CELL DIVISION PROTEIN SEPF"/>
    <property type="match status" value="1"/>
</dbReference>
<dbReference type="PANTHER" id="PTHR35798:SF1">
    <property type="entry name" value="CELL DIVISION PROTEIN SEPF"/>
    <property type="match status" value="1"/>
</dbReference>
<dbReference type="Pfam" id="PF04472">
    <property type="entry name" value="SepF"/>
    <property type="match status" value="1"/>
</dbReference>
<reference key="1">
    <citation type="journal article" date="2010" name="Genome Biol.">
        <title>Structure and dynamics of the pan-genome of Streptococcus pneumoniae and closely related species.</title>
        <authorList>
            <person name="Donati C."/>
            <person name="Hiller N.L."/>
            <person name="Tettelin H."/>
            <person name="Muzzi A."/>
            <person name="Croucher N.J."/>
            <person name="Angiuoli S.V."/>
            <person name="Oggioni M."/>
            <person name="Dunning Hotopp J.C."/>
            <person name="Hu F.Z."/>
            <person name="Riley D.R."/>
            <person name="Covacci A."/>
            <person name="Mitchell T.J."/>
            <person name="Bentley S.D."/>
            <person name="Kilian M."/>
            <person name="Ehrlich G.D."/>
            <person name="Rappuoli R."/>
            <person name="Moxon E.R."/>
            <person name="Masignani V."/>
        </authorList>
    </citation>
    <scope>NUCLEOTIDE SEQUENCE [LARGE SCALE GENOMIC DNA]</scope>
    <source>
        <strain>JJA</strain>
    </source>
</reference>
<name>SEPF_STRZJ</name>
<gene>
    <name evidence="1" type="primary">sepF</name>
    <name type="ordered locus">SPJ_1559</name>
</gene>
<proteinExistence type="inferred from homology"/>
<keyword id="KW-0131">Cell cycle</keyword>
<keyword id="KW-0132">Cell division</keyword>
<keyword id="KW-0963">Cytoplasm</keyword>
<keyword id="KW-0717">Septation</keyword>
<comment type="function">
    <text evidence="1">Cell division protein that is part of the divisome complex and is recruited early to the Z-ring. Probably stimulates Z-ring formation, perhaps through the cross-linking of FtsZ protofilaments. Its function overlaps with FtsA.</text>
</comment>
<comment type="subunit">
    <text evidence="1">Homodimer. Interacts with FtsZ.</text>
</comment>
<comment type="subcellular location">
    <subcellularLocation>
        <location evidence="1">Cytoplasm</location>
    </subcellularLocation>
    <text evidence="1">Localizes to the division site, in a FtsZ-dependent manner.</text>
</comment>
<comment type="similarity">
    <text evidence="1">Belongs to the SepF family.</text>
</comment>
<sequence length="179" mass="20597">MSLKDRFDRFIDYFTEDEDSSLPYEKRDEPVFTSVNSSQEPALPMNQPSQSAGAKENNITRLHARQQELANQSQRATDKVIIDVRYPRKYEDATEIVDLLAGNESILIDFQYMTEVQARRCLDYLDGACHVLAGNLKKVASTMYLLTPVNVIVNVEDIRLPDEDQQGEFGFDMKRNRVR</sequence>
<feature type="chain" id="PRO_1000164546" description="Cell division protein SepF">
    <location>
        <begin position="1"/>
        <end position="179"/>
    </location>
</feature>
<feature type="region of interest" description="Disordered" evidence="2">
    <location>
        <begin position="19"/>
        <end position="55"/>
    </location>
</feature>
<feature type="compositionally biased region" description="Polar residues" evidence="2">
    <location>
        <begin position="33"/>
        <end position="55"/>
    </location>
</feature>
<organism>
    <name type="scientific">Streptococcus pneumoniae (strain JJA)</name>
    <dbReference type="NCBI Taxonomy" id="488222"/>
    <lineage>
        <taxon>Bacteria</taxon>
        <taxon>Bacillati</taxon>
        <taxon>Bacillota</taxon>
        <taxon>Bacilli</taxon>
        <taxon>Lactobacillales</taxon>
        <taxon>Streptococcaceae</taxon>
        <taxon>Streptococcus</taxon>
    </lineage>
</organism>